<comment type="function">
    <text evidence="1">Catalyzes the 2-thiolation of uridine at the wobble position (U34) of tRNA, leading to the formation of s(2)U34.</text>
</comment>
<comment type="catalytic activity">
    <reaction evidence="1">
        <text>S-sulfanyl-L-cysteinyl-[protein] + uridine(34) in tRNA + AH2 + ATP = 2-thiouridine(34) in tRNA + L-cysteinyl-[protein] + A + AMP + diphosphate + H(+)</text>
        <dbReference type="Rhea" id="RHEA:47032"/>
        <dbReference type="Rhea" id="RHEA-COMP:10131"/>
        <dbReference type="Rhea" id="RHEA-COMP:11726"/>
        <dbReference type="Rhea" id="RHEA-COMP:11727"/>
        <dbReference type="Rhea" id="RHEA-COMP:11728"/>
        <dbReference type="ChEBI" id="CHEBI:13193"/>
        <dbReference type="ChEBI" id="CHEBI:15378"/>
        <dbReference type="ChEBI" id="CHEBI:17499"/>
        <dbReference type="ChEBI" id="CHEBI:29950"/>
        <dbReference type="ChEBI" id="CHEBI:30616"/>
        <dbReference type="ChEBI" id="CHEBI:33019"/>
        <dbReference type="ChEBI" id="CHEBI:61963"/>
        <dbReference type="ChEBI" id="CHEBI:65315"/>
        <dbReference type="ChEBI" id="CHEBI:87170"/>
        <dbReference type="ChEBI" id="CHEBI:456215"/>
        <dbReference type="EC" id="2.8.1.13"/>
    </reaction>
</comment>
<comment type="subcellular location">
    <subcellularLocation>
        <location evidence="1">Cytoplasm</location>
    </subcellularLocation>
</comment>
<comment type="similarity">
    <text evidence="1">Belongs to the MnmA/TRMU family.</text>
</comment>
<proteinExistence type="inferred from homology"/>
<evidence type="ECO:0000255" key="1">
    <source>
        <dbReference type="HAMAP-Rule" id="MF_00144"/>
    </source>
</evidence>
<dbReference type="EC" id="2.8.1.13" evidence="1"/>
<dbReference type="EMBL" id="CP000958">
    <property type="protein sequence ID" value="ACA89843.1"/>
    <property type="molecule type" value="Genomic_DNA"/>
</dbReference>
<dbReference type="RefSeq" id="WP_012327912.1">
    <property type="nucleotide sequence ID" value="NC_010508.1"/>
</dbReference>
<dbReference type="SMR" id="B1JVW3"/>
<dbReference type="GeneID" id="83047465"/>
<dbReference type="KEGG" id="bcm:Bcenmc03_0665"/>
<dbReference type="HOGENOM" id="CLU_035188_1_0_4"/>
<dbReference type="Proteomes" id="UP000002169">
    <property type="component" value="Chromosome 1"/>
</dbReference>
<dbReference type="GO" id="GO:0005737">
    <property type="term" value="C:cytoplasm"/>
    <property type="evidence" value="ECO:0007669"/>
    <property type="project" value="UniProtKB-SubCell"/>
</dbReference>
<dbReference type="GO" id="GO:0005524">
    <property type="term" value="F:ATP binding"/>
    <property type="evidence" value="ECO:0007669"/>
    <property type="project" value="UniProtKB-KW"/>
</dbReference>
<dbReference type="GO" id="GO:0000049">
    <property type="term" value="F:tRNA binding"/>
    <property type="evidence" value="ECO:0007669"/>
    <property type="project" value="UniProtKB-KW"/>
</dbReference>
<dbReference type="GO" id="GO:0103016">
    <property type="term" value="F:tRNA-uridine 2-sulfurtransferase activity"/>
    <property type="evidence" value="ECO:0007669"/>
    <property type="project" value="UniProtKB-EC"/>
</dbReference>
<dbReference type="GO" id="GO:0002143">
    <property type="term" value="P:tRNA wobble position uridine thiolation"/>
    <property type="evidence" value="ECO:0007669"/>
    <property type="project" value="TreeGrafter"/>
</dbReference>
<dbReference type="CDD" id="cd01998">
    <property type="entry name" value="MnmA_TRMU-like"/>
    <property type="match status" value="1"/>
</dbReference>
<dbReference type="FunFam" id="2.30.30.280:FF:000001">
    <property type="entry name" value="tRNA-specific 2-thiouridylase MnmA"/>
    <property type="match status" value="1"/>
</dbReference>
<dbReference type="FunFam" id="2.40.30.10:FF:000023">
    <property type="entry name" value="tRNA-specific 2-thiouridylase MnmA"/>
    <property type="match status" value="1"/>
</dbReference>
<dbReference type="FunFam" id="3.40.50.620:FF:000004">
    <property type="entry name" value="tRNA-specific 2-thiouridylase MnmA"/>
    <property type="match status" value="1"/>
</dbReference>
<dbReference type="Gene3D" id="2.30.30.280">
    <property type="entry name" value="Adenine nucleotide alpha hydrolases-like domains"/>
    <property type="match status" value="1"/>
</dbReference>
<dbReference type="Gene3D" id="3.40.50.620">
    <property type="entry name" value="HUPs"/>
    <property type="match status" value="1"/>
</dbReference>
<dbReference type="Gene3D" id="2.40.30.10">
    <property type="entry name" value="Translation factors"/>
    <property type="match status" value="1"/>
</dbReference>
<dbReference type="HAMAP" id="MF_00144">
    <property type="entry name" value="tRNA_thiouridyl_MnmA"/>
    <property type="match status" value="1"/>
</dbReference>
<dbReference type="InterPro" id="IPR004506">
    <property type="entry name" value="MnmA-like"/>
</dbReference>
<dbReference type="InterPro" id="IPR046885">
    <property type="entry name" value="MnmA-like_C"/>
</dbReference>
<dbReference type="InterPro" id="IPR046884">
    <property type="entry name" value="MnmA-like_central"/>
</dbReference>
<dbReference type="InterPro" id="IPR023382">
    <property type="entry name" value="MnmA-like_central_sf"/>
</dbReference>
<dbReference type="InterPro" id="IPR014729">
    <property type="entry name" value="Rossmann-like_a/b/a_fold"/>
</dbReference>
<dbReference type="NCBIfam" id="NF001138">
    <property type="entry name" value="PRK00143.1"/>
    <property type="match status" value="1"/>
</dbReference>
<dbReference type="NCBIfam" id="TIGR00420">
    <property type="entry name" value="trmU"/>
    <property type="match status" value="1"/>
</dbReference>
<dbReference type="PANTHER" id="PTHR11933:SF5">
    <property type="entry name" value="MITOCHONDRIAL TRNA-SPECIFIC 2-THIOURIDYLASE 1"/>
    <property type="match status" value="1"/>
</dbReference>
<dbReference type="PANTHER" id="PTHR11933">
    <property type="entry name" value="TRNA 5-METHYLAMINOMETHYL-2-THIOURIDYLATE -METHYLTRANSFERASE"/>
    <property type="match status" value="1"/>
</dbReference>
<dbReference type="Pfam" id="PF03054">
    <property type="entry name" value="tRNA_Me_trans"/>
    <property type="match status" value="1"/>
</dbReference>
<dbReference type="Pfam" id="PF20258">
    <property type="entry name" value="tRNA_Me_trans_C"/>
    <property type="match status" value="1"/>
</dbReference>
<dbReference type="Pfam" id="PF20259">
    <property type="entry name" value="tRNA_Me_trans_M"/>
    <property type="match status" value="1"/>
</dbReference>
<dbReference type="SUPFAM" id="SSF52402">
    <property type="entry name" value="Adenine nucleotide alpha hydrolases-like"/>
    <property type="match status" value="1"/>
</dbReference>
<accession>B1JVW3</accession>
<keyword id="KW-0067">ATP-binding</keyword>
<keyword id="KW-0963">Cytoplasm</keyword>
<keyword id="KW-1015">Disulfide bond</keyword>
<keyword id="KW-0547">Nucleotide-binding</keyword>
<keyword id="KW-0694">RNA-binding</keyword>
<keyword id="KW-0808">Transferase</keyword>
<keyword id="KW-0819">tRNA processing</keyword>
<keyword id="KW-0820">tRNA-binding</keyword>
<name>MNMA_BURO0</name>
<reference key="1">
    <citation type="submission" date="2008-02" db="EMBL/GenBank/DDBJ databases">
        <title>Complete sequence of chromosome 1 of Burkholderia cenocepacia MC0-3.</title>
        <authorList>
            <person name="Copeland A."/>
            <person name="Lucas S."/>
            <person name="Lapidus A."/>
            <person name="Barry K."/>
            <person name="Bruce D."/>
            <person name="Goodwin L."/>
            <person name="Glavina del Rio T."/>
            <person name="Dalin E."/>
            <person name="Tice H."/>
            <person name="Pitluck S."/>
            <person name="Chain P."/>
            <person name="Malfatti S."/>
            <person name="Shin M."/>
            <person name="Vergez L."/>
            <person name="Schmutz J."/>
            <person name="Larimer F."/>
            <person name="Land M."/>
            <person name="Hauser L."/>
            <person name="Kyrpides N."/>
            <person name="Mikhailova N."/>
            <person name="Tiedje J."/>
            <person name="Richardson P."/>
        </authorList>
    </citation>
    <scope>NUCLEOTIDE SEQUENCE [LARGE SCALE GENOMIC DNA]</scope>
    <source>
        <strain>MC0-3</strain>
    </source>
</reference>
<feature type="chain" id="PRO_0000349552" description="tRNA-specific 2-thiouridylase MnmA">
    <location>
        <begin position="1"/>
        <end position="391"/>
    </location>
</feature>
<feature type="region of interest" description="Interaction with target base in tRNA" evidence="1">
    <location>
        <begin position="95"/>
        <end position="97"/>
    </location>
</feature>
<feature type="region of interest" description="Interaction with tRNA" evidence="1">
    <location>
        <begin position="146"/>
        <end position="148"/>
    </location>
</feature>
<feature type="region of interest" description="Interaction with tRNA" evidence="1">
    <location>
        <begin position="308"/>
        <end position="309"/>
    </location>
</feature>
<feature type="active site" description="Nucleophile" evidence="1">
    <location>
        <position position="100"/>
    </location>
</feature>
<feature type="active site" description="Cysteine persulfide intermediate" evidence="1">
    <location>
        <position position="196"/>
    </location>
</feature>
<feature type="binding site" evidence="1">
    <location>
        <begin position="9"/>
        <end position="16"/>
    </location>
    <ligand>
        <name>ATP</name>
        <dbReference type="ChEBI" id="CHEBI:30616"/>
    </ligand>
</feature>
<feature type="binding site" evidence="1">
    <location>
        <position position="35"/>
    </location>
    <ligand>
        <name>ATP</name>
        <dbReference type="ChEBI" id="CHEBI:30616"/>
    </ligand>
</feature>
<feature type="binding site" evidence="1">
    <location>
        <position position="124"/>
    </location>
    <ligand>
        <name>ATP</name>
        <dbReference type="ChEBI" id="CHEBI:30616"/>
    </ligand>
</feature>
<feature type="site" description="Interaction with tRNA" evidence="1">
    <location>
        <position position="125"/>
    </location>
</feature>
<feature type="site" description="Interaction with tRNA" evidence="1">
    <location>
        <position position="351"/>
    </location>
</feature>
<feature type="disulfide bond" description="Alternate" evidence="1">
    <location>
        <begin position="100"/>
        <end position="196"/>
    </location>
</feature>
<gene>
    <name evidence="1" type="primary">mnmA</name>
    <name type="ordered locus">Bcenmc03_0665</name>
</gene>
<sequence>MSKRRVVVGMSGGVDSSVTAWLLKEQGYDVVGLFMKNWEDDDDGEYCSTRQDWIDVVSVADLIGIDVEAVNFAAEYKDRVFAEFLREYSAGRTPNPDVLCNAEIKFKAFLDHAMSLDAEMIATGHYARVRERDGRFELLKAFDHTKDQSYFLHRLNQAQLSKTMFPLGEIPKTKVREIAAQIGLPNAKKKDSTGICFIGERPFRDFLNRYLPTKPGPMKTPDGKVVGEHIGLAFYTFGQRKGIGLGGSKDGNGDPWFVAAKDIASNTLYVVQGHDHPWLLSRELVAGNVSWVAGEPPADGFACGAKTRYRQADAACVFGGAATGAAAAGPAGEARFSLAFDDAQWAVTPGQSAVLYDGEICLGGGIIESAATGQPGQATSAGHAPALAEAR</sequence>
<protein>
    <recommendedName>
        <fullName evidence="1">tRNA-specific 2-thiouridylase MnmA</fullName>
        <ecNumber evidence="1">2.8.1.13</ecNumber>
    </recommendedName>
</protein>
<organism>
    <name type="scientific">Burkholderia orbicola (strain MC0-3)</name>
    <dbReference type="NCBI Taxonomy" id="406425"/>
    <lineage>
        <taxon>Bacteria</taxon>
        <taxon>Pseudomonadati</taxon>
        <taxon>Pseudomonadota</taxon>
        <taxon>Betaproteobacteria</taxon>
        <taxon>Burkholderiales</taxon>
        <taxon>Burkholderiaceae</taxon>
        <taxon>Burkholderia</taxon>
        <taxon>Burkholderia cepacia complex</taxon>
        <taxon>Burkholderia orbicola</taxon>
    </lineage>
</organism>